<protein>
    <recommendedName>
        <fullName evidence="1">tRNA-specific 2-thiouridylase MnmA</fullName>
        <ecNumber evidence="1">2.8.1.13</ecNumber>
    </recommendedName>
</protein>
<reference key="1">
    <citation type="journal article" date="2005" name="Proc. Natl. Acad. Sci. U.S.A.">
        <title>The genome of the heartwater agent Ehrlichia ruminantium contains multiple tandem repeats of actively variable copy number.</title>
        <authorList>
            <person name="Collins N.E."/>
            <person name="Liebenberg J."/>
            <person name="de Villiers E.P."/>
            <person name="Brayton K.A."/>
            <person name="Louw E."/>
            <person name="Pretorius A."/>
            <person name="Faber F.E."/>
            <person name="van Heerden H."/>
            <person name="Josemans A."/>
            <person name="van Kleef M."/>
            <person name="Steyn H.C."/>
            <person name="van Strijp M.F."/>
            <person name="Zweygarth E."/>
            <person name="Jongejan F."/>
            <person name="Maillard J.C."/>
            <person name="Berthier D."/>
            <person name="Botha M."/>
            <person name="Joubert F."/>
            <person name="Corton C.H."/>
            <person name="Thomson N.R."/>
            <person name="Allsopp M.T."/>
            <person name="Allsopp B.A."/>
        </authorList>
    </citation>
    <scope>NUCLEOTIDE SEQUENCE [LARGE SCALE GENOMIC DNA]</scope>
    <source>
        <strain>Welgevonden</strain>
    </source>
</reference>
<reference key="2">
    <citation type="journal article" date="2006" name="J. Bacteriol.">
        <title>Comparative genomic analysis of three strains of Ehrlichia ruminantium reveals an active process of genome size plasticity.</title>
        <authorList>
            <person name="Frutos R."/>
            <person name="Viari A."/>
            <person name="Ferraz C."/>
            <person name="Morgat A."/>
            <person name="Eychenie S."/>
            <person name="Kandassamy Y."/>
            <person name="Chantal I."/>
            <person name="Bensaid A."/>
            <person name="Coissac E."/>
            <person name="Vachiery N."/>
            <person name="Demaille J."/>
            <person name="Martinez D."/>
        </authorList>
    </citation>
    <scope>NUCLEOTIDE SEQUENCE [LARGE SCALE GENOMIC DNA]</scope>
    <source>
        <strain>Welgevonden</strain>
    </source>
</reference>
<organism>
    <name type="scientific">Ehrlichia ruminantium (strain Welgevonden)</name>
    <dbReference type="NCBI Taxonomy" id="254945"/>
    <lineage>
        <taxon>Bacteria</taxon>
        <taxon>Pseudomonadati</taxon>
        <taxon>Pseudomonadota</taxon>
        <taxon>Alphaproteobacteria</taxon>
        <taxon>Rickettsiales</taxon>
        <taxon>Anaplasmataceae</taxon>
        <taxon>Ehrlichia</taxon>
    </lineage>
</organism>
<accession>Q5HBV2</accession>
<accession>Q5FD20</accession>
<gene>
    <name evidence="1" type="primary">mnmA</name>
    <name type="ordered locus">Erum2230</name>
    <name type="ordered locus">ERWE_CDS_02250</name>
</gene>
<proteinExistence type="inferred from homology"/>
<comment type="function">
    <text evidence="1">Catalyzes the 2-thiolation of uridine at the wobble position (U34) of tRNA, leading to the formation of s(2)U34.</text>
</comment>
<comment type="catalytic activity">
    <reaction evidence="1">
        <text>S-sulfanyl-L-cysteinyl-[protein] + uridine(34) in tRNA + AH2 + ATP = 2-thiouridine(34) in tRNA + L-cysteinyl-[protein] + A + AMP + diphosphate + H(+)</text>
        <dbReference type="Rhea" id="RHEA:47032"/>
        <dbReference type="Rhea" id="RHEA-COMP:10131"/>
        <dbReference type="Rhea" id="RHEA-COMP:11726"/>
        <dbReference type="Rhea" id="RHEA-COMP:11727"/>
        <dbReference type="Rhea" id="RHEA-COMP:11728"/>
        <dbReference type="ChEBI" id="CHEBI:13193"/>
        <dbReference type="ChEBI" id="CHEBI:15378"/>
        <dbReference type="ChEBI" id="CHEBI:17499"/>
        <dbReference type="ChEBI" id="CHEBI:29950"/>
        <dbReference type="ChEBI" id="CHEBI:30616"/>
        <dbReference type="ChEBI" id="CHEBI:33019"/>
        <dbReference type="ChEBI" id="CHEBI:61963"/>
        <dbReference type="ChEBI" id="CHEBI:65315"/>
        <dbReference type="ChEBI" id="CHEBI:87170"/>
        <dbReference type="ChEBI" id="CHEBI:456215"/>
        <dbReference type="EC" id="2.8.1.13"/>
    </reaction>
</comment>
<comment type="subcellular location">
    <subcellularLocation>
        <location evidence="1">Cytoplasm</location>
    </subcellularLocation>
</comment>
<comment type="similarity">
    <text evidence="1">Belongs to the MnmA/TRMU family.</text>
</comment>
<sequence length="370" mass="41209">MLDDFKIDLLVKNKPPTSTTAVVAMSGGVDSSVAAALLHKLGYKVIGITLQLYNNNNNSNTKGACCGSLDTQDAKQVASSMGFPHYTLNYEKVFREEVIEDFIDTYTQGKTPIPCIKCNQVIKFRDLLNATKSLGADVLVTGHYIRKIEQDDDIYVYSSKDTKKDQSYFLFATTVEQLRLLRFPLGNFHKEDIRKLAKYFNLQVANKPDSQNICFVTDTYKKTIAELRPHTIKKGNIIDINGNILSQHNGIVNFTIGQRKGIGISSKAPLYVIKLNPDTNEVTVGPKSALLQNKLYIREINWLAKEKIPHNGLNVKVKLRSSHSGSPATIFPNNNNTATILLQDSYCTVTPGQACVIYDHDRMLGGGWIC</sequence>
<evidence type="ECO:0000255" key="1">
    <source>
        <dbReference type="HAMAP-Rule" id="MF_00144"/>
    </source>
</evidence>
<name>MNMA_EHRRW</name>
<dbReference type="EC" id="2.8.1.13" evidence="1"/>
<dbReference type="EMBL" id="CR767821">
    <property type="protein sequence ID" value="CAH57941.1"/>
    <property type="molecule type" value="Genomic_DNA"/>
</dbReference>
<dbReference type="EMBL" id="CR925678">
    <property type="protein sequence ID" value="CAI26719.1"/>
    <property type="molecule type" value="Genomic_DNA"/>
</dbReference>
<dbReference type="RefSeq" id="WP_011154909.1">
    <property type="nucleotide sequence ID" value="NC_005295.2"/>
</dbReference>
<dbReference type="SMR" id="Q5HBV2"/>
<dbReference type="GeneID" id="33058355"/>
<dbReference type="KEGG" id="eru:Erum2230"/>
<dbReference type="KEGG" id="erw:ERWE_CDS_02250"/>
<dbReference type="eggNOG" id="COG0482">
    <property type="taxonomic scope" value="Bacteria"/>
</dbReference>
<dbReference type="HOGENOM" id="CLU_035188_0_1_5"/>
<dbReference type="Proteomes" id="UP000001021">
    <property type="component" value="Chromosome"/>
</dbReference>
<dbReference type="GO" id="GO:0005737">
    <property type="term" value="C:cytoplasm"/>
    <property type="evidence" value="ECO:0007669"/>
    <property type="project" value="UniProtKB-SubCell"/>
</dbReference>
<dbReference type="GO" id="GO:0005524">
    <property type="term" value="F:ATP binding"/>
    <property type="evidence" value="ECO:0007669"/>
    <property type="project" value="UniProtKB-KW"/>
</dbReference>
<dbReference type="GO" id="GO:0000049">
    <property type="term" value="F:tRNA binding"/>
    <property type="evidence" value="ECO:0007669"/>
    <property type="project" value="UniProtKB-KW"/>
</dbReference>
<dbReference type="GO" id="GO:0103016">
    <property type="term" value="F:tRNA-uridine 2-sulfurtransferase activity"/>
    <property type="evidence" value="ECO:0007669"/>
    <property type="project" value="UniProtKB-EC"/>
</dbReference>
<dbReference type="GO" id="GO:0002143">
    <property type="term" value="P:tRNA wobble position uridine thiolation"/>
    <property type="evidence" value="ECO:0007669"/>
    <property type="project" value="TreeGrafter"/>
</dbReference>
<dbReference type="CDD" id="cd01998">
    <property type="entry name" value="MnmA_TRMU-like"/>
    <property type="match status" value="1"/>
</dbReference>
<dbReference type="FunFam" id="2.30.30.280:FF:000001">
    <property type="entry name" value="tRNA-specific 2-thiouridylase MnmA"/>
    <property type="match status" value="1"/>
</dbReference>
<dbReference type="FunFam" id="3.40.50.620:FF:000115">
    <property type="entry name" value="tRNA-specific 2-thiouridylase MnmA"/>
    <property type="match status" value="1"/>
</dbReference>
<dbReference type="Gene3D" id="2.30.30.280">
    <property type="entry name" value="Adenine nucleotide alpha hydrolases-like domains"/>
    <property type="match status" value="1"/>
</dbReference>
<dbReference type="Gene3D" id="3.40.50.620">
    <property type="entry name" value="HUPs"/>
    <property type="match status" value="1"/>
</dbReference>
<dbReference type="Gene3D" id="2.40.30.10">
    <property type="entry name" value="Translation factors"/>
    <property type="match status" value="1"/>
</dbReference>
<dbReference type="HAMAP" id="MF_00144">
    <property type="entry name" value="tRNA_thiouridyl_MnmA"/>
    <property type="match status" value="1"/>
</dbReference>
<dbReference type="InterPro" id="IPR004506">
    <property type="entry name" value="MnmA-like"/>
</dbReference>
<dbReference type="InterPro" id="IPR046885">
    <property type="entry name" value="MnmA-like_C"/>
</dbReference>
<dbReference type="InterPro" id="IPR046884">
    <property type="entry name" value="MnmA-like_central"/>
</dbReference>
<dbReference type="InterPro" id="IPR023382">
    <property type="entry name" value="MnmA-like_central_sf"/>
</dbReference>
<dbReference type="InterPro" id="IPR014729">
    <property type="entry name" value="Rossmann-like_a/b/a_fold"/>
</dbReference>
<dbReference type="NCBIfam" id="NF001138">
    <property type="entry name" value="PRK00143.1"/>
    <property type="match status" value="1"/>
</dbReference>
<dbReference type="NCBIfam" id="TIGR00420">
    <property type="entry name" value="trmU"/>
    <property type="match status" value="1"/>
</dbReference>
<dbReference type="PANTHER" id="PTHR11933:SF5">
    <property type="entry name" value="MITOCHONDRIAL TRNA-SPECIFIC 2-THIOURIDYLASE 1"/>
    <property type="match status" value="1"/>
</dbReference>
<dbReference type="PANTHER" id="PTHR11933">
    <property type="entry name" value="TRNA 5-METHYLAMINOMETHYL-2-THIOURIDYLATE -METHYLTRANSFERASE"/>
    <property type="match status" value="1"/>
</dbReference>
<dbReference type="Pfam" id="PF03054">
    <property type="entry name" value="tRNA_Me_trans"/>
    <property type="match status" value="1"/>
</dbReference>
<dbReference type="Pfam" id="PF20258">
    <property type="entry name" value="tRNA_Me_trans_C"/>
    <property type="match status" value="1"/>
</dbReference>
<dbReference type="Pfam" id="PF20259">
    <property type="entry name" value="tRNA_Me_trans_M"/>
    <property type="match status" value="1"/>
</dbReference>
<dbReference type="SUPFAM" id="SSF52402">
    <property type="entry name" value="Adenine nucleotide alpha hydrolases-like"/>
    <property type="match status" value="1"/>
</dbReference>
<feature type="chain" id="PRO_0000349623" description="tRNA-specific 2-thiouridylase MnmA">
    <location>
        <begin position="1"/>
        <end position="370"/>
    </location>
</feature>
<feature type="region of interest" description="Interaction with tRNA" evidence="1">
    <location>
        <begin position="164"/>
        <end position="166"/>
    </location>
</feature>
<feature type="active site" description="Nucleophile" evidence="1">
    <location>
        <position position="118"/>
    </location>
</feature>
<feature type="active site" description="Cysteine persulfide intermediate" evidence="1">
    <location>
        <position position="214"/>
    </location>
</feature>
<feature type="binding site" evidence="1">
    <location>
        <begin position="24"/>
        <end position="31"/>
    </location>
    <ligand>
        <name>ATP</name>
        <dbReference type="ChEBI" id="CHEBI:30616"/>
    </ligand>
</feature>
<feature type="binding site" evidence="1">
    <location>
        <position position="50"/>
    </location>
    <ligand>
        <name>ATP</name>
        <dbReference type="ChEBI" id="CHEBI:30616"/>
    </ligand>
</feature>
<feature type="binding site" evidence="1">
    <location>
        <position position="142"/>
    </location>
    <ligand>
        <name>ATP</name>
        <dbReference type="ChEBI" id="CHEBI:30616"/>
    </ligand>
</feature>
<feature type="site" description="Interaction with tRNA" evidence="1">
    <location>
        <position position="143"/>
    </location>
</feature>
<feature type="site" description="Interaction with tRNA" evidence="1">
    <location>
        <position position="353"/>
    </location>
</feature>
<feature type="disulfide bond" description="Alternate" evidence="1">
    <location>
        <begin position="118"/>
        <end position="214"/>
    </location>
</feature>
<keyword id="KW-0067">ATP-binding</keyword>
<keyword id="KW-0963">Cytoplasm</keyword>
<keyword id="KW-1015">Disulfide bond</keyword>
<keyword id="KW-0547">Nucleotide-binding</keyword>
<keyword id="KW-0694">RNA-binding</keyword>
<keyword id="KW-0808">Transferase</keyword>
<keyword id="KW-0819">tRNA processing</keyword>
<keyword id="KW-0820">tRNA-binding</keyword>